<gene>
    <name evidence="1" type="primary">radA</name>
    <name type="ordered locus">Pars_2310</name>
</gene>
<dbReference type="EMBL" id="CP000660">
    <property type="protein sequence ID" value="ABP51854.1"/>
    <property type="molecule type" value="Genomic_DNA"/>
</dbReference>
<dbReference type="RefSeq" id="WP_011901757.1">
    <property type="nucleotide sequence ID" value="NC_009376.1"/>
</dbReference>
<dbReference type="SMR" id="A4WN87"/>
<dbReference type="STRING" id="340102.Pars_2310"/>
<dbReference type="GeneID" id="5055446"/>
<dbReference type="KEGG" id="pas:Pars_2310"/>
<dbReference type="HOGENOM" id="CLU_041732_0_0_2"/>
<dbReference type="OrthoDB" id="31129at2157"/>
<dbReference type="PhylomeDB" id="A4WN87"/>
<dbReference type="Proteomes" id="UP000001567">
    <property type="component" value="Chromosome"/>
</dbReference>
<dbReference type="GO" id="GO:0005524">
    <property type="term" value="F:ATP binding"/>
    <property type="evidence" value="ECO:0007669"/>
    <property type="project" value="UniProtKB-UniRule"/>
</dbReference>
<dbReference type="GO" id="GO:0016887">
    <property type="term" value="F:ATP hydrolysis activity"/>
    <property type="evidence" value="ECO:0007669"/>
    <property type="project" value="InterPro"/>
</dbReference>
<dbReference type="GO" id="GO:0140664">
    <property type="term" value="F:ATP-dependent DNA damage sensor activity"/>
    <property type="evidence" value="ECO:0007669"/>
    <property type="project" value="InterPro"/>
</dbReference>
<dbReference type="GO" id="GO:0003684">
    <property type="term" value="F:damaged DNA binding"/>
    <property type="evidence" value="ECO:0007669"/>
    <property type="project" value="UniProtKB-UniRule"/>
</dbReference>
<dbReference type="GO" id="GO:0006310">
    <property type="term" value="P:DNA recombination"/>
    <property type="evidence" value="ECO:0007669"/>
    <property type="project" value="UniProtKB-UniRule"/>
</dbReference>
<dbReference type="GO" id="GO:0006281">
    <property type="term" value="P:DNA repair"/>
    <property type="evidence" value="ECO:0007669"/>
    <property type="project" value="UniProtKB-UniRule"/>
</dbReference>
<dbReference type="CDD" id="cd19515">
    <property type="entry name" value="archRadA"/>
    <property type="match status" value="1"/>
</dbReference>
<dbReference type="FunFam" id="3.40.50.300:FF:002052">
    <property type="entry name" value="DNA repair protein RAD51 homolog"/>
    <property type="match status" value="1"/>
</dbReference>
<dbReference type="Gene3D" id="1.10.150.20">
    <property type="entry name" value="5' to 3' exonuclease, C-terminal subdomain"/>
    <property type="match status" value="1"/>
</dbReference>
<dbReference type="Gene3D" id="3.40.50.300">
    <property type="entry name" value="P-loop containing nucleotide triphosphate hydrolases"/>
    <property type="match status" value="1"/>
</dbReference>
<dbReference type="HAMAP" id="MF_00348">
    <property type="entry name" value="RadA_arch"/>
    <property type="match status" value="1"/>
</dbReference>
<dbReference type="InterPro" id="IPR003593">
    <property type="entry name" value="AAA+_ATPase"/>
</dbReference>
<dbReference type="InterPro" id="IPR013632">
    <property type="entry name" value="DNA_recomb/repair_Rad51_C"/>
</dbReference>
<dbReference type="InterPro" id="IPR011938">
    <property type="entry name" value="DNA_recomb/repair_RadA"/>
</dbReference>
<dbReference type="InterPro" id="IPR016467">
    <property type="entry name" value="DNA_recomb/repair_RecA-like"/>
</dbReference>
<dbReference type="InterPro" id="IPR010995">
    <property type="entry name" value="DNA_repair_Rad51/TF_NusA_a-hlx"/>
</dbReference>
<dbReference type="InterPro" id="IPR027417">
    <property type="entry name" value="P-loop_NTPase"/>
</dbReference>
<dbReference type="InterPro" id="IPR020588">
    <property type="entry name" value="RecA_ATP-bd"/>
</dbReference>
<dbReference type="InterPro" id="IPR020587">
    <property type="entry name" value="RecA_monomer-monomer_interface"/>
</dbReference>
<dbReference type="NCBIfam" id="NF003301">
    <property type="entry name" value="PRK04301.1"/>
    <property type="match status" value="1"/>
</dbReference>
<dbReference type="NCBIfam" id="TIGR02236">
    <property type="entry name" value="recomb_radA"/>
    <property type="match status" value="1"/>
</dbReference>
<dbReference type="PANTHER" id="PTHR22942:SF30">
    <property type="entry name" value="MEIOTIC RECOMBINATION PROTEIN DMC1_LIM15 HOMOLOG"/>
    <property type="match status" value="1"/>
</dbReference>
<dbReference type="PANTHER" id="PTHR22942">
    <property type="entry name" value="RECA/RAD51/RADA DNA STRAND-PAIRING FAMILY MEMBER"/>
    <property type="match status" value="1"/>
</dbReference>
<dbReference type="Pfam" id="PF14520">
    <property type="entry name" value="HHH_5"/>
    <property type="match status" value="1"/>
</dbReference>
<dbReference type="Pfam" id="PF08423">
    <property type="entry name" value="Rad51"/>
    <property type="match status" value="1"/>
</dbReference>
<dbReference type="PIRSF" id="PIRSF005856">
    <property type="entry name" value="Rad51"/>
    <property type="match status" value="1"/>
</dbReference>
<dbReference type="SMART" id="SM00382">
    <property type="entry name" value="AAA"/>
    <property type="match status" value="1"/>
</dbReference>
<dbReference type="SUPFAM" id="SSF52540">
    <property type="entry name" value="P-loop containing nucleoside triphosphate hydrolases"/>
    <property type="match status" value="1"/>
</dbReference>
<dbReference type="SUPFAM" id="SSF47794">
    <property type="entry name" value="Rad51 N-terminal domain-like"/>
    <property type="match status" value="1"/>
</dbReference>
<dbReference type="PROSITE" id="PS50162">
    <property type="entry name" value="RECA_2"/>
    <property type="match status" value="1"/>
</dbReference>
<dbReference type="PROSITE" id="PS50163">
    <property type="entry name" value="RECA_3"/>
    <property type="match status" value="1"/>
</dbReference>
<accession>A4WN87</accession>
<evidence type="ECO:0000255" key="1">
    <source>
        <dbReference type="HAMAP-Rule" id="MF_00348"/>
    </source>
</evidence>
<feature type="chain" id="PRO_1000048392" description="DNA repair and recombination protein RadA">
    <location>
        <begin position="1"/>
        <end position="333"/>
    </location>
</feature>
<feature type="binding site" evidence="1">
    <location>
        <begin position="127"/>
        <end position="134"/>
    </location>
    <ligand>
        <name>ATP</name>
        <dbReference type="ChEBI" id="CHEBI:30616"/>
    </ligand>
</feature>
<comment type="function">
    <text evidence="1">Involved in DNA repair and in homologous recombination. Binds and assemble on single-stranded DNA to form a nucleoprotein filament. Hydrolyzes ATP in a ssDNA-dependent manner and promotes DNA strand exchange between homologous DNA molecules.</text>
</comment>
<comment type="similarity">
    <text evidence="1">Belongs to the eukaryotic RecA-like protein family.</text>
</comment>
<sequence>MSSKKKKTDAEAAQVQAAVEVSPDLDVEELEGVGKVTGAKLKEKGFYTVKDVAFASVKELAEIIGNEERALQIIESARKMLGLHSFISALEVYERRKKIRRISTGVRSLDELLGGGIETRAVTEVVGEFGSGKTQLCHQLAVMVQLPEERGGLGAKAIYIDTENTFRPERIMQMARARGLDPDQALNNIFYARAYSSDHQMILVEHAKSIVKQHNVALIVVDSVIAHFRSEFPGRENLAERQQKLNKHVADLLRLADAYDVAVVITNQVMAQPDVFFGNPLRPAGGNILAHGATYRLWLRKSKENIRIVKIFDSPYHPEGEVSFRITEEGLID</sequence>
<reference key="1">
    <citation type="submission" date="2007-04" db="EMBL/GenBank/DDBJ databases">
        <title>Complete sequence of Pyrobaculum arsenaticum DSM 13514.</title>
        <authorList>
            <consortium name="US DOE Joint Genome Institute"/>
            <person name="Copeland A."/>
            <person name="Lucas S."/>
            <person name="Lapidus A."/>
            <person name="Barry K."/>
            <person name="Glavina del Rio T."/>
            <person name="Dalin E."/>
            <person name="Tice H."/>
            <person name="Pitluck S."/>
            <person name="Chain P."/>
            <person name="Malfatti S."/>
            <person name="Shin M."/>
            <person name="Vergez L."/>
            <person name="Schmutz J."/>
            <person name="Larimer F."/>
            <person name="Land M."/>
            <person name="Hauser L."/>
            <person name="Kyrpides N."/>
            <person name="Mikhailova N."/>
            <person name="Cozen A.E."/>
            <person name="Fitz-Gibbon S.T."/>
            <person name="House C.H."/>
            <person name="Saltikov C."/>
            <person name="Lowe T.M."/>
            <person name="Richardson P."/>
        </authorList>
    </citation>
    <scope>NUCLEOTIDE SEQUENCE [LARGE SCALE GENOMIC DNA]</scope>
    <source>
        <strain>ATCC 700994 / DSM 13514 / JCM 11321 / PZ6</strain>
    </source>
</reference>
<proteinExistence type="inferred from homology"/>
<keyword id="KW-0067">ATP-binding</keyword>
<keyword id="KW-0227">DNA damage</keyword>
<keyword id="KW-0233">DNA recombination</keyword>
<keyword id="KW-0238">DNA-binding</keyword>
<keyword id="KW-0547">Nucleotide-binding</keyword>
<name>RADA_PYRAR</name>
<organism>
    <name type="scientific">Pyrobaculum arsenaticum (strain DSM 13514 / JCM 11321 / PZ6)</name>
    <dbReference type="NCBI Taxonomy" id="340102"/>
    <lineage>
        <taxon>Archaea</taxon>
        <taxon>Thermoproteota</taxon>
        <taxon>Thermoprotei</taxon>
        <taxon>Thermoproteales</taxon>
        <taxon>Thermoproteaceae</taxon>
        <taxon>Pyrobaculum</taxon>
    </lineage>
</organism>
<protein>
    <recommendedName>
        <fullName evidence="1">DNA repair and recombination protein RadA</fullName>
    </recommendedName>
</protein>